<feature type="chain" id="PRO_0000091587" description="Protein-methionine-sulfoxide reductase heme-binding subunit MsrQ">
    <location>
        <begin position="1"/>
        <end position="218"/>
    </location>
</feature>
<feature type="transmembrane region" description="Helical" evidence="1">
    <location>
        <begin position="14"/>
        <end position="34"/>
    </location>
</feature>
<feature type="transmembrane region" description="Helical" evidence="1">
    <location>
        <begin position="60"/>
        <end position="80"/>
    </location>
</feature>
<feature type="transmembrane region" description="Helical" evidence="1">
    <location>
        <begin position="86"/>
        <end position="106"/>
    </location>
</feature>
<feature type="transmembrane region" description="Helical" evidence="1">
    <location>
        <begin position="121"/>
        <end position="141"/>
    </location>
</feature>
<feature type="transmembrane region" description="Helical" evidence="1">
    <location>
        <begin position="155"/>
        <end position="175"/>
    </location>
</feature>
<name>MSRQ_XANCP</name>
<dbReference type="EMBL" id="AE008922">
    <property type="protein sequence ID" value="AAM40882.1"/>
    <property type="molecule type" value="Genomic_DNA"/>
</dbReference>
<dbReference type="RefSeq" id="NP_636958.1">
    <property type="nucleotide sequence ID" value="NC_003902.1"/>
</dbReference>
<dbReference type="RefSeq" id="WP_011036769.1">
    <property type="nucleotide sequence ID" value="NC_003902.1"/>
</dbReference>
<dbReference type="SMR" id="Q8PA99"/>
<dbReference type="STRING" id="190485.XCC1587"/>
<dbReference type="EnsemblBacteria" id="AAM40882">
    <property type="protein sequence ID" value="AAM40882"/>
    <property type="gene ID" value="XCC1587"/>
</dbReference>
<dbReference type="KEGG" id="xcc:XCC1587"/>
<dbReference type="PATRIC" id="fig|190485.4.peg.1700"/>
<dbReference type="eggNOG" id="COG2717">
    <property type="taxonomic scope" value="Bacteria"/>
</dbReference>
<dbReference type="HOGENOM" id="CLU_080662_0_1_6"/>
<dbReference type="OrthoDB" id="9788328at2"/>
<dbReference type="Proteomes" id="UP000001010">
    <property type="component" value="Chromosome"/>
</dbReference>
<dbReference type="GO" id="GO:0005886">
    <property type="term" value="C:plasma membrane"/>
    <property type="evidence" value="ECO:0000318"/>
    <property type="project" value="GO_Central"/>
</dbReference>
<dbReference type="GO" id="GO:0009055">
    <property type="term" value="F:electron transfer activity"/>
    <property type="evidence" value="ECO:0007669"/>
    <property type="project" value="UniProtKB-UniRule"/>
</dbReference>
<dbReference type="GO" id="GO:0010181">
    <property type="term" value="F:FMN binding"/>
    <property type="evidence" value="ECO:0000318"/>
    <property type="project" value="GO_Central"/>
</dbReference>
<dbReference type="GO" id="GO:0020037">
    <property type="term" value="F:heme binding"/>
    <property type="evidence" value="ECO:0000318"/>
    <property type="project" value="GO_Central"/>
</dbReference>
<dbReference type="GO" id="GO:0046872">
    <property type="term" value="F:metal ion binding"/>
    <property type="evidence" value="ECO:0007669"/>
    <property type="project" value="UniProtKB-KW"/>
</dbReference>
<dbReference type="GO" id="GO:0016679">
    <property type="term" value="F:oxidoreductase activity, acting on diphenols and related substances as donors"/>
    <property type="evidence" value="ECO:0000318"/>
    <property type="project" value="GO_Central"/>
</dbReference>
<dbReference type="GO" id="GO:0030091">
    <property type="term" value="P:protein repair"/>
    <property type="evidence" value="ECO:0007669"/>
    <property type="project" value="UniProtKB-UniRule"/>
</dbReference>
<dbReference type="HAMAP" id="MF_01207">
    <property type="entry name" value="MsrQ"/>
    <property type="match status" value="1"/>
</dbReference>
<dbReference type="InterPro" id="IPR013130">
    <property type="entry name" value="Fe3_Rdtase_TM_dom"/>
</dbReference>
<dbReference type="InterPro" id="IPR022837">
    <property type="entry name" value="MsrQ-like"/>
</dbReference>
<dbReference type="NCBIfam" id="NF003835">
    <property type="entry name" value="PRK05419.2-2"/>
    <property type="match status" value="1"/>
</dbReference>
<dbReference type="PANTHER" id="PTHR36964">
    <property type="entry name" value="PROTEIN-METHIONINE-SULFOXIDE REDUCTASE HEME-BINDING SUBUNIT MSRQ"/>
    <property type="match status" value="1"/>
</dbReference>
<dbReference type="PANTHER" id="PTHR36964:SF1">
    <property type="entry name" value="PROTEIN-METHIONINE-SULFOXIDE REDUCTASE HEME-BINDING SUBUNIT MSRQ"/>
    <property type="match status" value="1"/>
</dbReference>
<dbReference type="Pfam" id="PF01794">
    <property type="entry name" value="Ferric_reduct"/>
    <property type="match status" value="1"/>
</dbReference>
<gene>
    <name evidence="1" type="primary">msrQ</name>
    <name type="ordered locus">XCC1587</name>
</gene>
<protein>
    <recommendedName>
        <fullName evidence="1">Protein-methionine-sulfoxide reductase heme-binding subunit MsrQ</fullName>
    </recommendedName>
    <alternativeName>
        <fullName evidence="1">Flavocytochrome MsrQ</fullName>
    </alternativeName>
</protein>
<accession>Q8PA99</accession>
<sequence length="218" mass="24940">MAKKSVSVIAAKTAVHAAVLAPIALLGWQFWQVWQQGSDALGADPVAEIEHRTGLWALRLLLITLAITPLRQLTGQAVLIRFRRMLGLYAFFYASVHLTAYLWLDLRGFWTQIFEEIVKRPYITVGFTAWLLLVPLAITSTQGWMRRLKRNWGRLHMLIYPIGLLAVLHFWWLVKSDIREPALYAGILALLLGWRVWKRLSARRTTARHSAPPPATPR</sequence>
<reference key="1">
    <citation type="journal article" date="2002" name="Nature">
        <title>Comparison of the genomes of two Xanthomonas pathogens with differing host specificities.</title>
        <authorList>
            <person name="da Silva A.C.R."/>
            <person name="Ferro J.A."/>
            <person name="Reinach F.C."/>
            <person name="Farah C.S."/>
            <person name="Furlan L.R."/>
            <person name="Quaggio R.B."/>
            <person name="Monteiro-Vitorello C.B."/>
            <person name="Van Sluys M.A."/>
            <person name="Almeida N.F. Jr."/>
            <person name="Alves L.M.C."/>
            <person name="do Amaral A.M."/>
            <person name="Bertolini M.C."/>
            <person name="Camargo L.E.A."/>
            <person name="Camarotte G."/>
            <person name="Cannavan F."/>
            <person name="Cardozo J."/>
            <person name="Chambergo F."/>
            <person name="Ciapina L.P."/>
            <person name="Cicarelli R.M.B."/>
            <person name="Coutinho L.L."/>
            <person name="Cursino-Santos J.R."/>
            <person name="El-Dorry H."/>
            <person name="Faria J.B."/>
            <person name="Ferreira A.J.S."/>
            <person name="Ferreira R.C.C."/>
            <person name="Ferro M.I.T."/>
            <person name="Formighieri E.F."/>
            <person name="Franco M.C."/>
            <person name="Greggio C.C."/>
            <person name="Gruber A."/>
            <person name="Katsuyama A.M."/>
            <person name="Kishi L.T."/>
            <person name="Leite R.P."/>
            <person name="Lemos E.G.M."/>
            <person name="Lemos M.V.F."/>
            <person name="Locali E.C."/>
            <person name="Machado M.A."/>
            <person name="Madeira A.M.B.N."/>
            <person name="Martinez-Rossi N.M."/>
            <person name="Martins E.C."/>
            <person name="Meidanis J."/>
            <person name="Menck C.F.M."/>
            <person name="Miyaki C.Y."/>
            <person name="Moon D.H."/>
            <person name="Moreira L.M."/>
            <person name="Novo M.T.M."/>
            <person name="Okura V.K."/>
            <person name="Oliveira M.C."/>
            <person name="Oliveira V.R."/>
            <person name="Pereira H.A."/>
            <person name="Rossi A."/>
            <person name="Sena J.A.D."/>
            <person name="Silva C."/>
            <person name="de Souza R.F."/>
            <person name="Spinola L.A.F."/>
            <person name="Takita M.A."/>
            <person name="Tamura R.E."/>
            <person name="Teixeira E.C."/>
            <person name="Tezza R.I.D."/>
            <person name="Trindade dos Santos M."/>
            <person name="Truffi D."/>
            <person name="Tsai S.M."/>
            <person name="White F.F."/>
            <person name="Setubal J.C."/>
            <person name="Kitajima J.P."/>
        </authorList>
    </citation>
    <scope>NUCLEOTIDE SEQUENCE [LARGE SCALE GENOMIC DNA]</scope>
    <source>
        <strain>ATCC 33913 / DSM 3586 / NCPPB 528 / LMG 568 / P 25</strain>
    </source>
</reference>
<keyword id="KW-0997">Cell inner membrane</keyword>
<keyword id="KW-1003">Cell membrane</keyword>
<keyword id="KW-0249">Electron transport</keyword>
<keyword id="KW-0285">Flavoprotein</keyword>
<keyword id="KW-0288">FMN</keyword>
<keyword id="KW-0349">Heme</keyword>
<keyword id="KW-0408">Iron</keyword>
<keyword id="KW-0472">Membrane</keyword>
<keyword id="KW-0479">Metal-binding</keyword>
<keyword id="KW-1185">Reference proteome</keyword>
<keyword id="KW-0812">Transmembrane</keyword>
<keyword id="KW-1133">Transmembrane helix</keyword>
<keyword id="KW-0813">Transport</keyword>
<organism>
    <name type="scientific">Xanthomonas campestris pv. campestris (strain ATCC 33913 / DSM 3586 / NCPPB 528 / LMG 568 / P 25)</name>
    <dbReference type="NCBI Taxonomy" id="190485"/>
    <lineage>
        <taxon>Bacteria</taxon>
        <taxon>Pseudomonadati</taxon>
        <taxon>Pseudomonadota</taxon>
        <taxon>Gammaproteobacteria</taxon>
        <taxon>Lysobacterales</taxon>
        <taxon>Lysobacteraceae</taxon>
        <taxon>Xanthomonas</taxon>
    </lineage>
</organism>
<comment type="function">
    <text evidence="1">Part of the MsrPQ system that repairs oxidized periplasmic proteins containing methionine sulfoxide residues (Met-O), using respiratory chain electrons. Thus protects these proteins from oxidative-stress damage caused by reactive species of oxygen and chlorine generated by the host defense mechanisms. MsrPQ is essential for the maintenance of envelope integrity under bleach stress, rescuing a wide series of structurally unrelated periplasmic proteins from methionine oxidation. MsrQ provides electrons for reduction to the reductase catalytic subunit MsrP, using the quinone pool of the respiratory chain.</text>
</comment>
<comment type="cofactor">
    <cofactor evidence="1">
        <name>FMN</name>
        <dbReference type="ChEBI" id="CHEBI:58210"/>
    </cofactor>
    <text evidence="1">Binds 1 FMN per subunit.</text>
</comment>
<comment type="cofactor">
    <cofactor evidence="1">
        <name>heme b</name>
        <dbReference type="ChEBI" id="CHEBI:60344"/>
    </cofactor>
    <text evidence="1">Binds 1 heme b (iron(II)-protoporphyrin IX) group per subunit.</text>
</comment>
<comment type="subunit">
    <text evidence="1">Heterodimer of a catalytic subunit (MsrP) and a heme-binding subunit (MsrQ).</text>
</comment>
<comment type="subcellular location">
    <subcellularLocation>
        <location evidence="1">Cell inner membrane</location>
        <topology evidence="1">Multi-pass membrane protein</topology>
    </subcellularLocation>
</comment>
<comment type="similarity">
    <text evidence="1">Belongs to the MsrQ family.</text>
</comment>
<proteinExistence type="inferred from homology"/>
<evidence type="ECO:0000255" key="1">
    <source>
        <dbReference type="HAMAP-Rule" id="MF_01207"/>
    </source>
</evidence>